<comment type="function">
    <text>Displays significant potent antimicrobial activity against clinical isolates of Gram-negative multidrug resistant strains of E.coli, P.aeruginosa and A.baumanii with MIC values as low as 4.4 uM. Additionally, it displays low cytolytic and hemolytic activity against human erythrocytes reaching 50% hemolysis at 100 uM.</text>
</comment>
<comment type="subcellular location">
    <subcellularLocation>
        <location evidence="1">Secreted</location>
    </subcellularLocation>
    <subcellularLocation>
        <location evidence="5">Target cell membrane</location>
    </subcellularLocation>
</comment>
<comment type="tissue specificity">
    <text evidence="4">Expressed by the venom gland.</text>
</comment>
<comment type="mass spectrometry" mass="4873.0" method="Electrospray" evidence="1"/>
<comment type="miscellaneous">
    <text evidence="1">Adopts the characteristic alpha-helical amphipathic structure in TFE solution, but an unexpected random coil conformation in water.</text>
</comment>
<comment type="miscellaneous">
    <text evidence="1">Is an unstable peptide when the venom is stored after milking. This produces a shorter peptide, named Vm36, which lacks the 8 amino acid residues at the N-terminus.</text>
</comment>
<comment type="similarity">
    <text evidence="4">Belongs to the non-disulfide-bridged peptide (NDBP) superfamily. Long chain multifunctional peptide (group 2) family.</text>
</comment>
<accession>F1AWB0</accession>
<sequence length="82" mass="8869">MNAKTLFVVFLIGMLVTEQVEAGIWSSIKNLASKAWNSDIGQSLRNKAAGAINKFVADKIGVTPSQAASMTLDEIVDAMYYD</sequence>
<evidence type="ECO:0000269" key="1">
    <source>
    </source>
</evidence>
<evidence type="ECO:0000303" key="2">
    <source>
    </source>
</evidence>
<evidence type="ECO:0000303" key="3">
    <source>
    </source>
</evidence>
<evidence type="ECO:0000305" key="4"/>
<evidence type="ECO:0000305" key="5">
    <source>
    </source>
</evidence>
<organism>
    <name type="scientific">Vaejovis mexicanus</name>
    <name type="common">Mexican scorpion</name>
    <dbReference type="NCBI Taxonomy" id="993612"/>
    <lineage>
        <taxon>Eukaryota</taxon>
        <taxon>Metazoa</taxon>
        <taxon>Ecdysozoa</taxon>
        <taxon>Arthropoda</taxon>
        <taxon>Chelicerata</taxon>
        <taxon>Arachnida</taxon>
        <taxon>Scorpiones</taxon>
        <taxon>Iurida</taxon>
        <taxon>Chactoidea</taxon>
        <taxon>Vaejovidae</taxon>
        <taxon>Vaejovis</taxon>
    </lineage>
</organism>
<reference key="1">
    <citation type="journal article" date="2011" name="Toxicon">
        <title>Vejovine, a new antibiotic from the scorpion venom of Vaejovis mexicanus.</title>
        <authorList>
            <person name="Hernandez-Aponte C.A."/>
            <person name="Silva-Sanchez J."/>
            <person name="Quintero-Hernandez V."/>
            <person name="Rodriguez-Romero A."/>
            <person name="Balderas C."/>
            <person name="Possani L.D."/>
            <person name="Gurrola G.B."/>
        </authorList>
    </citation>
    <scope>NUCLEOTIDE SEQUENCE [MRNA]</scope>
    <scope>PROTEIN SEQUENCE OF 23-42</scope>
    <scope>SYNTHESIS OF 23-69</scope>
    <scope>SUBCELLULAR LOCATION</scope>
    <scope>MASS SPECTROMETRY</scope>
    <scope>CIRCULAR DICHROISM</scope>
    <source>
        <tissue>Venom gland</tissue>
    </source>
</reference>
<reference key="2">
    <citation type="journal article" date="2014" name="Peptides">
        <title>Scorpion venom peptides with no disulfide bridges: a review.</title>
        <authorList>
            <person name="Almaaytah A."/>
            <person name="Albalas Q."/>
        </authorList>
    </citation>
    <scope>NOMENCLATURE</scope>
</reference>
<proteinExistence type="evidence at protein level"/>
<dbReference type="EMBL" id="HM102352">
    <property type="protein sequence ID" value="ADZ24463.1"/>
    <property type="molecule type" value="mRNA"/>
</dbReference>
<dbReference type="GO" id="GO:0005576">
    <property type="term" value="C:extracellular region"/>
    <property type="evidence" value="ECO:0007669"/>
    <property type="project" value="UniProtKB-SubCell"/>
</dbReference>
<dbReference type="GO" id="GO:0016020">
    <property type="term" value="C:membrane"/>
    <property type="evidence" value="ECO:0007669"/>
    <property type="project" value="UniProtKB-KW"/>
</dbReference>
<dbReference type="GO" id="GO:0044218">
    <property type="term" value="C:other organism cell membrane"/>
    <property type="evidence" value="ECO:0007669"/>
    <property type="project" value="UniProtKB-KW"/>
</dbReference>
<dbReference type="GO" id="GO:0042742">
    <property type="term" value="P:defense response to bacterium"/>
    <property type="evidence" value="ECO:0007669"/>
    <property type="project" value="UniProtKB-KW"/>
</dbReference>
<dbReference type="GO" id="GO:0044179">
    <property type="term" value="P:hemolysis in another organism"/>
    <property type="evidence" value="ECO:0007669"/>
    <property type="project" value="InterPro"/>
</dbReference>
<dbReference type="InterPro" id="IPR012526">
    <property type="entry name" value="Antimicrobial_7"/>
</dbReference>
<dbReference type="Pfam" id="PF08102">
    <property type="entry name" value="Antimicrobial_7"/>
    <property type="match status" value="1"/>
</dbReference>
<protein>
    <recommendedName>
        <fullName evidence="2">Vejovine</fullName>
    </recommendedName>
    <alternativeName>
        <fullName evidence="3">Non-disulfide-bridged peptide 2.7</fullName>
        <shortName evidence="3">NDBP-2.7</shortName>
    </alternativeName>
</protein>
<name>NDB27_VAEME</name>
<keyword id="KW-0044">Antibiotic</keyword>
<keyword id="KW-0929">Antimicrobial</keyword>
<keyword id="KW-0204">Cytolysis</keyword>
<keyword id="KW-0903">Direct protein sequencing</keyword>
<keyword id="KW-0354">Hemolysis</keyword>
<keyword id="KW-0472">Membrane</keyword>
<keyword id="KW-0964">Secreted</keyword>
<keyword id="KW-0732">Signal</keyword>
<keyword id="KW-1052">Target cell membrane</keyword>
<keyword id="KW-1053">Target membrane</keyword>
<feature type="signal peptide" evidence="1">
    <location>
        <begin position="1"/>
        <end position="22"/>
    </location>
</feature>
<feature type="chain" id="PRO_5000725160" description="Vejovine">
    <location>
        <begin position="23"/>
        <end position="69"/>
    </location>
</feature>
<feature type="propeptide" id="PRO_0000432336" evidence="1">
    <location>
        <begin position="70"/>
        <end position="82"/>
    </location>
</feature>